<reference key="1">
    <citation type="journal article" date="2005" name="Science">
        <title>The transcriptional landscape of the mammalian genome.</title>
        <authorList>
            <person name="Carninci P."/>
            <person name="Kasukawa T."/>
            <person name="Katayama S."/>
            <person name="Gough J."/>
            <person name="Frith M.C."/>
            <person name="Maeda N."/>
            <person name="Oyama R."/>
            <person name="Ravasi T."/>
            <person name="Lenhard B."/>
            <person name="Wells C."/>
            <person name="Kodzius R."/>
            <person name="Shimokawa K."/>
            <person name="Bajic V.B."/>
            <person name="Brenner S.E."/>
            <person name="Batalov S."/>
            <person name="Forrest A.R."/>
            <person name="Zavolan M."/>
            <person name="Davis M.J."/>
            <person name="Wilming L.G."/>
            <person name="Aidinis V."/>
            <person name="Allen J.E."/>
            <person name="Ambesi-Impiombato A."/>
            <person name="Apweiler R."/>
            <person name="Aturaliya R.N."/>
            <person name="Bailey T.L."/>
            <person name="Bansal M."/>
            <person name="Baxter L."/>
            <person name="Beisel K.W."/>
            <person name="Bersano T."/>
            <person name="Bono H."/>
            <person name="Chalk A.M."/>
            <person name="Chiu K.P."/>
            <person name="Choudhary V."/>
            <person name="Christoffels A."/>
            <person name="Clutterbuck D.R."/>
            <person name="Crowe M.L."/>
            <person name="Dalla E."/>
            <person name="Dalrymple B.P."/>
            <person name="de Bono B."/>
            <person name="Della Gatta G."/>
            <person name="di Bernardo D."/>
            <person name="Down T."/>
            <person name="Engstrom P."/>
            <person name="Fagiolini M."/>
            <person name="Faulkner G."/>
            <person name="Fletcher C.F."/>
            <person name="Fukushima T."/>
            <person name="Furuno M."/>
            <person name="Futaki S."/>
            <person name="Gariboldi M."/>
            <person name="Georgii-Hemming P."/>
            <person name="Gingeras T.R."/>
            <person name="Gojobori T."/>
            <person name="Green R.E."/>
            <person name="Gustincich S."/>
            <person name="Harbers M."/>
            <person name="Hayashi Y."/>
            <person name="Hensch T.K."/>
            <person name="Hirokawa N."/>
            <person name="Hill D."/>
            <person name="Huminiecki L."/>
            <person name="Iacono M."/>
            <person name="Ikeo K."/>
            <person name="Iwama A."/>
            <person name="Ishikawa T."/>
            <person name="Jakt M."/>
            <person name="Kanapin A."/>
            <person name="Katoh M."/>
            <person name="Kawasawa Y."/>
            <person name="Kelso J."/>
            <person name="Kitamura H."/>
            <person name="Kitano H."/>
            <person name="Kollias G."/>
            <person name="Krishnan S.P."/>
            <person name="Kruger A."/>
            <person name="Kummerfeld S.K."/>
            <person name="Kurochkin I.V."/>
            <person name="Lareau L.F."/>
            <person name="Lazarevic D."/>
            <person name="Lipovich L."/>
            <person name="Liu J."/>
            <person name="Liuni S."/>
            <person name="McWilliam S."/>
            <person name="Madan Babu M."/>
            <person name="Madera M."/>
            <person name="Marchionni L."/>
            <person name="Matsuda H."/>
            <person name="Matsuzawa S."/>
            <person name="Miki H."/>
            <person name="Mignone F."/>
            <person name="Miyake S."/>
            <person name="Morris K."/>
            <person name="Mottagui-Tabar S."/>
            <person name="Mulder N."/>
            <person name="Nakano N."/>
            <person name="Nakauchi H."/>
            <person name="Ng P."/>
            <person name="Nilsson R."/>
            <person name="Nishiguchi S."/>
            <person name="Nishikawa S."/>
            <person name="Nori F."/>
            <person name="Ohara O."/>
            <person name="Okazaki Y."/>
            <person name="Orlando V."/>
            <person name="Pang K.C."/>
            <person name="Pavan W.J."/>
            <person name="Pavesi G."/>
            <person name="Pesole G."/>
            <person name="Petrovsky N."/>
            <person name="Piazza S."/>
            <person name="Reed J."/>
            <person name="Reid J.F."/>
            <person name="Ring B.Z."/>
            <person name="Ringwald M."/>
            <person name="Rost B."/>
            <person name="Ruan Y."/>
            <person name="Salzberg S.L."/>
            <person name="Sandelin A."/>
            <person name="Schneider C."/>
            <person name="Schoenbach C."/>
            <person name="Sekiguchi K."/>
            <person name="Semple C.A."/>
            <person name="Seno S."/>
            <person name="Sessa L."/>
            <person name="Sheng Y."/>
            <person name="Shibata Y."/>
            <person name="Shimada H."/>
            <person name="Shimada K."/>
            <person name="Silva D."/>
            <person name="Sinclair B."/>
            <person name="Sperling S."/>
            <person name="Stupka E."/>
            <person name="Sugiura K."/>
            <person name="Sultana R."/>
            <person name="Takenaka Y."/>
            <person name="Taki K."/>
            <person name="Tammoja K."/>
            <person name="Tan S.L."/>
            <person name="Tang S."/>
            <person name="Taylor M.S."/>
            <person name="Tegner J."/>
            <person name="Teichmann S.A."/>
            <person name="Ueda H.R."/>
            <person name="van Nimwegen E."/>
            <person name="Verardo R."/>
            <person name="Wei C.L."/>
            <person name="Yagi K."/>
            <person name="Yamanishi H."/>
            <person name="Zabarovsky E."/>
            <person name="Zhu S."/>
            <person name="Zimmer A."/>
            <person name="Hide W."/>
            <person name="Bult C."/>
            <person name="Grimmond S.M."/>
            <person name="Teasdale R.D."/>
            <person name="Liu E.T."/>
            <person name="Brusic V."/>
            <person name="Quackenbush J."/>
            <person name="Wahlestedt C."/>
            <person name="Mattick J.S."/>
            <person name="Hume D.A."/>
            <person name="Kai C."/>
            <person name="Sasaki D."/>
            <person name="Tomaru Y."/>
            <person name="Fukuda S."/>
            <person name="Kanamori-Katayama M."/>
            <person name="Suzuki M."/>
            <person name="Aoki J."/>
            <person name="Arakawa T."/>
            <person name="Iida J."/>
            <person name="Imamura K."/>
            <person name="Itoh M."/>
            <person name="Kato T."/>
            <person name="Kawaji H."/>
            <person name="Kawagashira N."/>
            <person name="Kawashima T."/>
            <person name="Kojima M."/>
            <person name="Kondo S."/>
            <person name="Konno H."/>
            <person name="Nakano K."/>
            <person name="Ninomiya N."/>
            <person name="Nishio T."/>
            <person name="Okada M."/>
            <person name="Plessy C."/>
            <person name="Shibata K."/>
            <person name="Shiraki T."/>
            <person name="Suzuki S."/>
            <person name="Tagami M."/>
            <person name="Waki K."/>
            <person name="Watahiki A."/>
            <person name="Okamura-Oho Y."/>
            <person name="Suzuki H."/>
            <person name="Kawai J."/>
            <person name="Hayashizaki Y."/>
        </authorList>
    </citation>
    <scope>NUCLEOTIDE SEQUENCE [LARGE SCALE MRNA]</scope>
    <source>
        <strain>C57BL/6J</strain>
        <tissue>Testis</tissue>
    </source>
</reference>
<reference key="2">
    <citation type="journal article" date="2004" name="Genome Res.">
        <title>The status, quality, and expansion of the NIH full-length cDNA project: the Mammalian Gene Collection (MGC).</title>
        <authorList>
            <consortium name="The MGC Project Team"/>
        </authorList>
    </citation>
    <scope>NUCLEOTIDE SEQUENCE [LARGE SCALE MRNA]</scope>
    <source>
        <tissue>Brain</tissue>
    </source>
</reference>
<organism>
    <name type="scientific">Mus musculus</name>
    <name type="common">Mouse</name>
    <dbReference type="NCBI Taxonomy" id="10090"/>
    <lineage>
        <taxon>Eukaryota</taxon>
        <taxon>Metazoa</taxon>
        <taxon>Chordata</taxon>
        <taxon>Craniata</taxon>
        <taxon>Vertebrata</taxon>
        <taxon>Euteleostomi</taxon>
        <taxon>Mammalia</taxon>
        <taxon>Eutheria</taxon>
        <taxon>Euarchontoglires</taxon>
        <taxon>Glires</taxon>
        <taxon>Rodentia</taxon>
        <taxon>Myomorpha</taxon>
        <taxon>Muroidea</taxon>
        <taxon>Muridae</taxon>
        <taxon>Murinae</taxon>
        <taxon>Mus</taxon>
        <taxon>Mus</taxon>
    </lineage>
</organism>
<protein>
    <recommendedName>
        <fullName>Sperm motility kinase Z</fullName>
        <ecNumber>2.7.11.1</ecNumber>
    </recommendedName>
</protein>
<name>SMKZ_MOUSE</name>
<comment type="function">
    <text evidence="1">May play a role in sperm motility, especially in the regulation of flagellar function.</text>
</comment>
<comment type="catalytic activity">
    <reaction>
        <text>L-seryl-[protein] + ATP = O-phospho-L-seryl-[protein] + ADP + H(+)</text>
        <dbReference type="Rhea" id="RHEA:17989"/>
        <dbReference type="Rhea" id="RHEA-COMP:9863"/>
        <dbReference type="Rhea" id="RHEA-COMP:11604"/>
        <dbReference type="ChEBI" id="CHEBI:15378"/>
        <dbReference type="ChEBI" id="CHEBI:29999"/>
        <dbReference type="ChEBI" id="CHEBI:30616"/>
        <dbReference type="ChEBI" id="CHEBI:83421"/>
        <dbReference type="ChEBI" id="CHEBI:456216"/>
        <dbReference type="EC" id="2.7.11.1"/>
    </reaction>
</comment>
<comment type="catalytic activity">
    <reaction>
        <text>L-threonyl-[protein] + ATP = O-phospho-L-threonyl-[protein] + ADP + H(+)</text>
        <dbReference type="Rhea" id="RHEA:46608"/>
        <dbReference type="Rhea" id="RHEA-COMP:11060"/>
        <dbReference type="Rhea" id="RHEA-COMP:11605"/>
        <dbReference type="ChEBI" id="CHEBI:15378"/>
        <dbReference type="ChEBI" id="CHEBI:30013"/>
        <dbReference type="ChEBI" id="CHEBI:30616"/>
        <dbReference type="ChEBI" id="CHEBI:61977"/>
        <dbReference type="ChEBI" id="CHEBI:456216"/>
        <dbReference type="EC" id="2.7.11.1"/>
    </reaction>
</comment>
<comment type="similarity">
    <text evidence="5">Belongs to the protein kinase superfamily. CAMK Ser/Thr protein kinase family. Smok subfamily.</text>
</comment>
<sequence>MYSDSEDESSELSTVLSMFEEKEFTRQYTVLKTLSQHGTTEVRLCSHHLTGVTVAVKALKYQRWWEPKVSEVEIMKMLSHPNIVSLLQVIETEQNIYLIMEVAQGTQLHNRVQEARCLKEDEARSIFVQLLSAIGYCHGEGVVHRDLKPDNVIVDEHGNVKIVDFGLGARFMPGQKLERLCGAFQFIPPEIFLGLPYDGPKVDIWALGVLLYYMVTGIFPFVGSTLSEISKEVLQGRYEIPYNLSKDLRSMIGLLLATNARQRPTAQDLLSHPWLQEGEKTITFHSNGDTSFPDPDIMAAMKNIGFHVQDIRESLKHRKFDETMATYNLLRAEACQDDGNYVQTKLMNPGMPPFPSVTDSGAFSLPPRRRASEPSFKVLVSSTEEHQLRQTGGTNAPFPPKKTPTMGRSQKQKRAMTAPCICLLRNTYIDTEDSSFCTSSQAEKTSSDPEKSETSTSCPLTPRGWRKWKKRIVACIQTLCCCTLPQKKCPRSVHPQK</sequence>
<gene>
    <name type="primary">Gm4922</name>
</gene>
<dbReference type="EC" id="2.7.11.1"/>
<dbReference type="EMBL" id="AK030207">
    <property type="protein sequence ID" value="BAC26842.1"/>
    <property type="molecule type" value="mRNA"/>
</dbReference>
<dbReference type="EMBL" id="BC125502">
    <property type="protein sequence ID" value="AAI25503.1"/>
    <property type="molecule type" value="mRNA"/>
</dbReference>
<dbReference type="EMBL" id="BC125506">
    <property type="protein sequence ID" value="AAI25507.1"/>
    <property type="molecule type" value="mRNA"/>
</dbReference>
<dbReference type="CCDS" id="CCDS48509.1"/>
<dbReference type="RefSeq" id="NP_808374.1">
    <property type="nucleotide sequence ID" value="NM_177706.4"/>
</dbReference>
<dbReference type="RefSeq" id="XP_017169423.1">
    <property type="nucleotide sequence ID" value="XM_017313934.1"/>
</dbReference>
<dbReference type="SMR" id="Q8C0N0"/>
<dbReference type="FunCoup" id="Q8C0N0">
    <property type="interactions" value="66"/>
</dbReference>
<dbReference type="GlyGen" id="Q8C0N0">
    <property type="glycosylation" value="1 site, 1 O-linked glycan (1 site)"/>
</dbReference>
<dbReference type="PaxDb" id="10090-ENSMUSP00000055273"/>
<dbReference type="ProteomicsDB" id="261442"/>
<dbReference type="DNASU" id="237300"/>
<dbReference type="Ensembl" id="ENSMUST00000055107.7">
    <property type="protein sequence ID" value="ENSMUSP00000055273.7"/>
    <property type="gene ID" value="ENSMUSG00000044624.8"/>
</dbReference>
<dbReference type="Ensembl" id="ENSMUST00000216654.2">
    <property type="protein sequence ID" value="ENSMUSP00000149756.2"/>
    <property type="gene ID" value="ENSMUSG00000044624.8"/>
</dbReference>
<dbReference type="GeneID" id="237300"/>
<dbReference type="KEGG" id="mmu:237300"/>
<dbReference type="UCSC" id="uc007emq.1">
    <property type="organism name" value="mouse"/>
</dbReference>
<dbReference type="AGR" id="MGI:3644318"/>
<dbReference type="MGI" id="MGI:3644318">
    <property type="gene designation" value="Gm4922"/>
</dbReference>
<dbReference type="VEuPathDB" id="HostDB:ENSMUSG00000044624"/>
<dbReference type="eggNOG" id="KOG0586">
    <property type="taxonomic scope" value="Eukaryota"/>
</dbReference>
<dbReference type="GeneTree" id="ENSGT00940000160886"/>
<dbReference type="HOGENOM" id="CLU_000288_157_7_1"/>
<dbReference type="InParanoid" id="Q8C0N0"/>
<dbReference type="OMA" id="SHECEHL"/>
<dbReference type="OrthoDB" id="9597001at2759"/>
<dbReference type="PhylomeDB" id="Q8C0N0"/>
<dbReference type="TreeFam" id="TF338820"/>
<dbReference type="BioGRID-ORCS" id="237300">
    <property type="hits" value="0 hits in 69 CRISPR screens"/>
</dbReference>
<dbReference type="PRO" id="PR:Q8C0N0"/>
<dbReference type="Proteomes" id="UP000000589">
    <property type="component" value="Chromosome 10"/>
</dbReference>
<dbReference type="RNAct" id="Q8C0N0">
    <property type="molecule type" value="protein"/>
</dbReference>
<dbReference type="Bgee" id="ENSMUSG00000044624">
    <property type="expression patterns" value="Expressed in spermatid and 2 other cell types or tissues"/>
</dbReference>
<dbReference type="GO" id="GO:0005524">
    <property type="term" value="F:ATP binding"/>
    <property type="evidence" value="ECO:0007669"/>
    <property type="project" value="UniProtKB-KW"/>
</dbReference>
<dbReference type="GO" id="GO:0106310">
    <property type="term" value="F:protein serine kinase activity"/>
    <property type="evidence" value="ECO:0007669"/>
    <property type="project" value="RHEA"/>
</dbReference>
<dbReference type="GO" id="GO:0004674">
    <property type="term" value="F:protein serine/threonine kinase activity"/>
    <property type="evidence" value="ECO:0007669"/>
    <property type="project" value="UniProtKB-KW"/>
</dbReference>
<dbReference type="CDD" id="cd14003">
    <property type="entry name" value="STKc_AMPK-like"/>
    <property type="match status" value="1"/>
</dbReference>
<dbReference type="CDD" id="cd14337">
    <property type="entry name" value="UBA_MARK_Par1"/>
    <property type="match status" value="1"/>
</dbReference>
<dbReference type="FunFam" id="1.10.510.10:FF:000002">
    <property type="entry name" value="Non-specific serine/threonine protein kinase"/>
    <property type="match status" value="1"/>
</dbReference>
<dbReference type="FunFam" id="1.10.8.10:FF:000005">
    <property type="entry name" value="Non-specific serine/threonine protein kinase"/>
    <property type="match status" value="1"/>
</dbReference>
<dbReference type="FunFam" id="3.30.200.20:FF:000003">
    <property type="entry name" value="Non-specific serine/threonine protein kinase"/>
    <property type="match status" value="1"/>
</dbReference>
<dbReference type="Gene3D" id="1.10.8.10">
    <property type="entry name" value="DNA helicase RuvA subunit, C-terminal domain"/>
    <property type="match status" value="1"/>
</dbReference>
<dbReference type="Gene3D" id="3.30.200.20">
    <property type="entry name" value="Phosphorylase Kinase, domain 1"/>
    <property type="match status" value="1"/>
</dbReference>
<dbReference type="Gene3D" id="1.10.510.10">
    <property type="entry name" value="Transferase(Phosphotransferase) domain 1"/>
    <property type="match status" value="1"/>
</dbReference>
<dbReference type="InterPro" id="IPR011009">
    <property type="entry name" value="Kinase-like_dom_sf"/>
</dbReference>
<dbReference type="InterPro" id="IPR000719">
    <property type="entry name" value="Prot_kinase_dom"/>
</dbReference>
<dbReference type="InterPro" id="IPR008271">
    <property type="entry name" value="Ser/Thr_kinase_AS"/>
</dbReference>
<dbReference type="PANTHER" id="PTHR24346">
    <property type="entry name" value="MAP/MICROTUBULE AFFINITY-REGULATING KINASE"/>
    <property type="match status" value="1"/>
</dbReference>
<dbReference type="PANTHER" id="PTHR24346:SF95">
    <property type="entry name" value="SPERM MOTILITY KINASE 3A"/>
    <property type="match status" value="1"/>
</dbReference>
<dbReference type="Pfam" id="PF00069">
    <property type="entry name" value="Pkinase"/>
    <property type="match status" value="1"/>
</dbReference>
<dbReference type="SMART" id="SM00220">
    <property type="entry name" value="S_TKc"/>
    <property type="match status" value="1"/>
</dbReference>
<dbReference type="SUPFAM" id="SSF56112">
    <property type="entry name" value="Protein kinase-like (PK-like)"/>
    <property type="match status" value="1"/>
</dbReference>
<dbReference type="PROSITE" id="PS50011">
    <property type="entry name" value="PROTEIN_KINASE_DOM"/>
    <property type="match status" value="1"/>
</dbReference>
<dbReference type="PROSITE" id="PS00108">
    <property type="entry name" value="PROTEIN_KINASE_ST"/>
    <property type="match status" value="1"/>
</dbReference>
<proteinExistence type="evidence at transcript level"/>
<feature type="chain" id="PRO_0000307877" description="Sperm motility kinase Z">
    <location>
        <begin position="1"/>
        <end position="497"/>
    </location>
</feature>
<feature type="domain" description="Protein kinase" evidence="2">
    <location>
        <begin position="28"/>
        <end position="275"/>
    </location>
</feature>
<feature type="domain" description="UBA">
    <location>
        <begin position="292"/>
        <end position="332"/>
    </location>
</feature>
<feature type="region of interest" description="Disordered" evidence="4">
    <location>
        <begin position="383"/>
        <end position="410"/>
    </location>
</feature>
<feature type="region of interest" description="Disordered" evidence="4">
    <location>
        <begin position="439"/>
        <end position="460"/>
    </location>
</feature>
<feature type="active site" description="Proton acceptor" evidence="2 3">
    <location>
        <position position="146"/>
    </location>
</feature>
<feature type="binding site" evidence="2">
    <location>
        <begin position="34"/>
        <end position="42"/>
    </location>
    <ligand>
        <name>ATP</name>
        <dbReference type="ChEBI" id="CHEBI:30616"/>
    </ligand>
</feature>
<feature type="binding site" evidence="2">
    <location>
        <position position="57"/>
    </location>
    <ligand>
        <name>ATP</name>
        <dbReference type="ChEBI" id="CHEBI:30616"/>
    </ligand>
</feature>
<accession>Q8C0N0</accession>
<keyword id="KW-0067">ATP-binding</keyword>
<keyword id="KW-0418">Kinase</keyword>
<keyword id="KW-0547">Nucleotide-binding</keyword>
<keyword id="KW-1185">Reference proteome</keyword>
<keyword id="KW-0723">Serine/threonine-protein kinase</keyword>
<keyword id="KW-0808">Transferase</keyword>
<evidence type="ECO:0000250" key="1"/>
<evidence type="ECO:0000255" key="2">
    <source>
        <dbReference type="PROSITE-ProRule" id="PRU00159"/>
    </source>
</evidence>
<evidence type="ECO:0000255" key="3">
    <source>
        <dbReference type="PROSITE-ProRule" id="PRU10027"/>
    </source>
</evidence>
<evidence type="ECO:0000256" key="4">
    <source>
        <dbReference type="SAM" id="MobiDB-lite"/>
    </source>
</evidence>
<evidence type="ECO:0000305" key="5"/>